<gene>
    <name type="primary">ACA8</name>
    <name type="ordered locus">At5g57110</name>
    <name type="ORF">MUL3.5</name>
</gene>
<name>ACA8_ARATH</name>
<sequence length="1074" mass="116174">MTSLLKSSPGRRRGGDVESGKSEHADSDSDTFYIPSKNASIERLQQWRKAALVLNASRRFRYTLDLKKEQETREMRQKIRSHAHALLAANRFMDMGRESGVEKTTGPATPAGDFGITPEQLVIMSKDHNSGALEQYGGTQGLANLLKTNPEKGISGDDDDLLKRKTIYGSNTYPRKKGKGFLRFLWDACHDLTLIILMVAAVASLALGIKTEGIKEGWYDGGSIAFAVILVIVVTAVSDYKQSLQFQNLNDEKRNIHLEVLRGGRRVEISIYDIVVGDVIPLNIGNQVPADGVLISGHSLALDESSMTGESKIVNKDANKDPFLMSGCKVADGNGSMLVTGVGVNTEWGLLMASISEDNGEETPLQVRLNGVATFIGSIGLAVAAAVLVILLTRYFTGHTKDNNGGPQFVKGKTKVGHVIDDVVKVLTVAVTIVVVAVPEGLPLAVTLTLAYSMRKMMADKALVRRLSACETMGSATTICSDKTGTLTLNQMTVVESYAGGKKTDTEQLPATITSLVVEGISQNTTGSIFVPEGGGDLEYSGSPTEKAILGWGVKLGMNFETARSQSSILHAFPFNSEKKRGGVAVKTADGEVHVHWKGASEIVLASCRSYIDEDGNVAPMTDDKASFFKNGINDMAGRTLRCVALAFRTYEAEKVPTGEELSKWVLPEDDLILLAIVGIKDPCRPGVKDSVVLCQNAGVKVRMVTGDNVQTARAIALECGILSSDADLSEPTLIEGKSFREMTDAERDKISDKISVMGRSSPNDKLLLVQSLRRQGHVVAVTGDGTNDAPALHEADIGLAMGIAGTEVAKESSDIIILDDNFASVVKVVRWGRSVYANIQKFIQFQLTVNVAALVINVVAAISSGDVPLTAVQLLWVNLIMDTLGALALATEPPTDHLMGRPPVGRKEPLITNIMWRNLLIQAIYQVSVLLTLNFRGISILGLEHEVHEHATRVKNTIIFNAFVLCQAFNEFNARKPDEKNIFKGVIKNRLFMGIIVITLVLQVIIVEFLGKFASTTKLNWKQWLICVGIGVISWPLALVGKFIPVPAAPISNKLKVLKFWGKKKNSSGEGSL</sequence>
<evidence type="ECO:0000250" key="1"/>
<evidence type="ECO:0000255" key="2"/>
<evidence type="ECO:0000256" key="3">
    <source>
        <dbReference type="SAM" id="MobiDB-lite"/>
    </source>
</evidence>
<evidence type="ECO:0000305" key="4"/>
<evidence type="ECO:0007829" key="5">
    <source>
        <dbReference type="PDB" id="4AQR"/>
    </source>
</evidence>
<evidence type="ECO:0007829" key="6">
    <source>
        <dbReference type="PDB" id="8QMP"/>
    </source>
</evidence>
<feature type="chain" id="PRO_0000046414" description="Calcium-transporting ATPase 8, plasma membrane-type">
    <location>
        <begin position="1"/>
        <end position="1074"/>
    </location>
</feature>
<feature type="topological domain" description="Cytoplasmic" evidence="2">
    <location>
        <begin position="1"/>
        <end position="180"/>
    </location>
</feature>
<feature type="transmembrane region" description="Helical" evidence="2">
    <location>
        <begin position="181"/>
        <end position="201"/>
    </location>
</feature>
<feature type="topological domain" description="Extracellular" evidence="2">
    <location>
        <begin position="202"/>
        <end position="219"/>
    </location>
</feature>
<feature type="transmembrane region" description="Helical" evidence="2">
    <location>
        <begin position="220"/>
        <end position="240"/>
    </location>
</feature>
<feature type="topological domain" description="Cytoplasmic" evidence="2">
    <location>
        <begin position="241"/>
        <end position="369"/>
    </location>
</feature>
<feature type="transmembrane region" description="Helical" evidence="2">
    <location>
        <begin position="370"/>
        <end position="389"/>
    </location>
</feature>
<feature type="topological domain" description="Extracellular" evidence="2">
    <location>
        <begin position="390"/>
        <end position="426"/>
    </location>
</feature>
<feature type="transmembrane region" description="Helical" evidence="2">
    <location>
        <begin position="427"/>
        <end position="444"/>
    </location>
</feature>
<feature type="topological domain" description="Cytoplasmic" evidence="2">
    <location>
        <begin position="445"/>
        <end position="840"/>
    </location>
</feature>
<feature type="transmembrane region" description="Helical" evidence="2">
    <location>
        <begin position="841"/>
        <end position="859"/>
    </location>
</feature>
<feature type="topological domain" description="Extracellular" evidence="2">
    <location>
        <begin position="860"/>
        <end position="870"/>
    </location>
</feature>
<feature type="transmembrane region" description="Helical" evidence="2">
    <location>
        <begin position="871"/>
        <end position="891"/>
    </location>
</feature>
<feature type="topological domain" description="Cytoplasmic" evidence="2">
    <location>
        <begin position="892"/>
        <end position="911"/>
    </location>
</feature>
<feature type="transmembrane region" description="Helical" evidence="2">
    <location>
        <begin position="912"/>
        <end position="934"/>
    </location>
</feature>
<feature type="topological domain" description="Extracellular" evidence="2">
    <location>
        <begin position="935"/>
        <end position="949"/>
    </location>
</feature>
<feature type="transmembrane region" description="Helical" evidence="2">
    <location>
        <begin position="950"/>
        <end position="971"/>
    </location>
</feature>
<feature type="topological domain" description="Cytoplasmic" evidence="2">
    <location>
        <begin position="972"/>
        <end position="989"/>
    </location>
</feature>
<feature type="transmembrane region" description="Helical" evidence="2">
    <location>
        <begin position="990"/>
        <end position="1011"/>
    </location>
</feature>
<feature type="topological domain" description="Extracellular" evidence="2">
    <location>
        <begin position="1012"/>
        <end position="1021"/>
    </location>
</feature>
<feature type="transmembrane region" description="Helical" evidence="2">
    <location>
        <begin position="1022"/>
        <end position="1043"/>
    </location>
</feature>
<feature type="topological domain" description="Cytoplasmic" evidence="2">
    <location>
        <begin position="1044"/>
        <end position="1074"/>
    </location>
</feature>
<feature type="region of interest" description="Disordered" evidence="3">
    <location>
        <begin position="1"/>
        <end position="33"/>
    </location>
</feature>
<feature type="region of interest" description="Interaction with calmodulin">
    <location>
        <begin position="43"/>
        <end position="54"/>
    </location>
</feature>
<feature type="compositionally biased region" description="Basic and acidic residues" evidence="3">
    <location>
        <begin position="13"/>
        <end position="27"/>
    </location>
</feature>
<feature type="active site" description="4-aspartylphosphate intermediate" evidence="1">
    <location>
        <position position="482"/>
    </location>
</feature>
<feature type="binding site" evidence="1">
    <location>
        <position position="785"/>
    </location>
    <ligand>
        <name>Mg(2+)</name>
        <dbReference type="ChEBI" id="CHEBI:18420"/>
    </ligand>
</feature>
<feature type="binding site" evidence="1">
    <location>
        <position position="789"/>
    </location>
    <ligand>
        <name>Mg(2+)</name>
        <dbReference type="ChEBI" id="CHEBI:18420"/>
    </ligand>
</feature>
<feature type="helix" evidence="5">
    <location>
        <begin position="40"/>
        <end position="94"/>
    </location>
</feature>
<feature type="strand" evidence="6">
    <location>
        <begin position="117"/>
        <end position="119"/>
    </location>
</feature>
<feature type="helix" evidence="6">
    <location>
        <begin position="120"/>
        <end position="126"/>
    </location>
</feature>
<feature type="turn" evidence="6">
    <location>
        <begin position="133"/>
        <end position="137"/>
    </location>
</feature>
<feature type="helix" evidence="6">
    <location>
        <begin position="138"/>
        <end position="141"/>
    </location>
</feature>
<feature type="turn" evidence="6">
    <location>
        <begin position="142"/>
        <end position="144"/>
    </location>
</feature>
<feature type="strand" evidence="6">
    <location>
        <begin position="156"/>
        <end position="158"/>
    </location>
</feature>
<feature type="helix" evidence="6">
    <location>
        <begin position="159"/>
        <end position="167"/>
    </location>
</feature>
<feature type="strand" evidence="6">
    <location>
        <begin position="180"/>
        <end position="182"/>
    </location>
</feature>
<feature type="helix" evidence="6">
    <location>
        <begin position="183"/>
        <end position="189"/>
    </location>
</feature>
<feature type="helix" evidence="6">
    <location>
        <begin position="192"/>
        <end position="212"/>
    </location>
</feature>
<feature type="helix" evidence="6">
    <location>
        <begin position="219"/>
        <end position="250"/>
    </location>
</feature>
<feature type="helix" evidence="6">
    <location>
        <begin position="271"/>
        <end position="273"/>
    </location>
</feature>
<feature type="strand" evidence="6">
    <location>
        <begin position="279"/>
        <end position="282"/>
    </location>
</feature>
<feature type="strand" evidence="6">
    <location>
        <begin position="290"/>
        <end position="303"/>
    </location>
</feature>
<feature type="helix" evidence="6">
    <location>
        <begin position="304"/>
        <end position="306"/>
    </location>
</feature>
<feature type="strand" evidence="6">
    <location>
        <begin position="318"/>
        <end position="321"/>
    </location>
</feature>
<feature type="strand" evidence="6">
    <location>
        <begin position="326"/>
        <end position="341"/>
    </location>
</feature>
<feature type="helix" evidence="6">
    <location>
        <begin position="343"/>
        <end position="345"/>
    </location>
</feature>
<feature type="helix" evidence="6">
    <location>
        <begin position="347"/>
        <end position="353"/>
    </location>
</feature>
<feature type="helix" evidence="6">
    <location>
        <begin position="364"/>
        <end position="397"/>
    </location>
</feature>
<feature type="helix" evidence="6">
    <location>
        <begin position="423"/>
        <end position="437"/>
    </location>
</feature>
<feature type="helix" evidence="6">
    <location>
        <begin position="442"/>
        <end position="459"/>
    </location>
</feature>
<feature type="strand" evidence="6">
    <location>
        <begin position="462"/>
        <end position="466"/>
    </location>
</feature>
<feature type="helix" evidence="6">
    <location>
        <begin position="469"/>
        <end position="472"/>
    </location>
</feature>
<feature type="turn" evidence="6">
    <location>
        <begin position="473"/>
        <end position="475"/>
    </location>
</feature>
<feature type="strand" evidence="6">
    <location>
        <begin position="478"/>
        <end position="481"/>
    </location>
</feature>
<feature type="strand" evidence="6">
    <location>
        <begin position="483"/>
        <end position="488"/>
    </location>
</feature>
<feature type="strand" evidence="6">
    <location>
        <begin position="493"/>
        <end position="497"/>
    </location>
</feature>
<feature type="helix" evidence="6">
    <location>
        <begin position="511"/>
        <end position="523"/>
    </location>
</feature>
<feature type="turn" evidence="6">
    <location>
        <begin position="532"/>
        <end position="534"/>
    </location>
</feature>
<feature type="helix" evidence="6">
    <location>
        <begin position="544"/>
        <end position="555"/>
    </location>
</feature>
<feature type="helix" evidence="6">
    <location>
        <begin position="560"/>
        <end position="564"/>
    </location>
</feature>
<feature type="strand" evidence="6">
    <location>
        <begin position="567"/>
        <end position="573"/>
    </location>
</feature>
<feature type="strand" evidence="6">
    <location>
        <begin position="577"/>
        <end position="579"/>
    </location>
</feature>
<feature type="strand" evidence="6">
    <location>
        <begin position="582"/>
        <end position="600"/>
    </location>
</feature>
<feature type="helix" evidence="6">
    <location>
        <begin position="601"/>
        <end position="606"/>
    </location>
</feature>
<feature type="strand" evidence="6">
    <location>
        <begin position="608"/>
        <end position="613"/>
    </location>
</feature>
<feature type="strand" evidence="6">
    <location>
        <begin position="618"/>
        <end position="620"/>
    </location>
</feature>
<feature type="helix" evidence="6">
    <location>
        <begin position="623"/>
        <end position="638"/>
    </location>
</feature>
<feature type="strand" evidence="6">
    <location>
        <begin position="644"/>
        <end position="649"/>
    </location>
</feature>
<feature type="turn" evidence="6">
    <location>
        <begin position="656"/>
        <end position="658"/>
    </location>
</feature>
<feature type="strand" evidence="6">
    <location>
        <begin position="670"/>
        <end position="681"/>
    </location>
</feature>
<feature type="helix" evidence="6">
    <location>
        <begin position="689"/>
        <end position="697"/>
    </location>
</feature>
<feature type="strand" evidence="6">
    <location>
        <begin position="701"/>
        <end position="705"/>
    </location>
</feature>
<feature type="helix" evidence="6">
    <location>
        <begin position="710"/>
        <end position="720"/>
    </location>
</feature>
<feature type="turn" evidence="6">
    <location>
        <begin position="731"/>
        <end position="733"/>
    </location>
</feature>
<feature type="helix" evidence="6">
    <location>
        <begin position="737"/>
        <end position="742"/>
    </location>
</feature>
<feature type="turn" evidence="6">
    <location>
        <begin position="745"/>
        <end position="748"/>
    </location>
</feature>
<feature type="turn" evidence="6">
    <location>
        <begin position="750"/>
        <end position="754"/>
    </location>
</feature>
<feature type="helix" evidence="6">
    <location>
        <begin position="763"/>
        <end position="775"/>
    </location>
</feature>
<feature type="strand" evidence="6">
    <location>
        <begin position="780"/>
        <end position="784"/>
    </location>
</feature>
<feature type="helix" evidence="6">
    <location>
        <begin position="787"/>
        <end position="789"/>
    </location>
</feature>
<feature type="helix" evidence="6">
    <location>
        <begin position="790"/>
        <end position="795"/>
    </location>
</feature>
<feature type="strand" evidence="6">
    <location>
        <begin position="796"/>
        <end position="802"/>
    </location>
</feature>
<feature type="turn" evidence="6">
    <location>
        <begin position="803"/>
        <end position="805"/>
    </location>
</feature>
<feature type="helix" evidence="6">
    <location>
        <begin position="808"/>
        <end position="812"/>
    </location>
</feature>
<feature type="strand" evidence="6">
    <location>
        <begin position="815"/>
        <end position="818"/>
    </location>
</feature>
<feature type="helix" evidence="6">
    <location>
        <begin position="824"/>
        <end position="865"/>
    </location>
</feature>
<feature type="helix" evidence="6">
    <location>
        <begin position="872"/>
        <end position="891"/>
    </location>
</feature>
<feature type="helix" evidence="6">
    <location>
        <begin position="898"/>
        <end position="901"/>
    </location>
</feature>
<feature type="strand" evidence="6">
    <location>
        <begin position="907"/>
        <end position="909"/>
    </location>
</feature>
<feature type="helix" evidence="6">
    <location>
        <begin position="914"/>
        <end position="941"/>
    </location>
</feature>
<feature type="strand" evidence="6">
    <location>
        <begin position="942"/>
        <end position="944"/>
    </location>
</feature>
<feature type="helix" evidence="6">
    <location>
        <begin position="949"/>
        <end position="976"/>
    </location>
</feature>
<feature type="helix" evidence="6">
    <location>
        <begin position="988"/>
        <end position="1006"/>
    </location>
</feature>
<feature type="strand" evidence="6">
    <location>
        <begin position="1009"/>
        <end position="1012"/>
    </location>
</feature>
<feature type="turn" evidence="6">
    <location>
        <begin position="1013"/>
        <end position="1016"/>
    </location>
</feature>
<feature type="helix" evidence="6">
    <location>
        <begin position="1022"/>
        <end position="1033"/>
    </location>
</feature>
<feature type="helix" evidence="6">
    <location>
        <begin position="1035"/>
        <end position="1044"/>
    </location>
</feature>
<dbReference type="EC" id="7.2.2.10"/>
<dbReference type="EMBL" id="AJ249352">
    <property type="protein sequence ID" value="CAB96189.1"/>
    <property type="molecule type" value="mRNA"/>
</dbReference>
<dbReference type="EMBL" id="AB023042">
    <property type="protein sequence ID" value="BAA97361.1"/>
    <property type="status" value="ALT_SEQ"/>
    <property type="molecule type" value="Genomic_DNA"/>
</dbReference>
<dbReference type="EMBL" id="CP002688">
    <property type="protein sequence ID" value="AED96847.1"/>
    <property type="molecule type" value="Genomic_DNA"/>
</dbReference>
<dbReference type="EMBL" id="CP002688">
    <property type="protein sequence ID" value="AED96848.1"/>
    <property type="molecule type" value="Genomic_DNA"/>
</dbReference>
<dbReference type="EMBL" id="CP002688">
    <property type="protein sequence ID" value="ANM69618.1"/>
    <property type="molecule type" value="Genomic_DNA"/>
</dbReference>
<dbReference type="EMBL" id="AY069869">
    <property type="protein sequence ID" value="AAL47426.1"/>
    <property type="molecule type" value="mRNA"/>
</dbReference>
<dbReference type="PIR" id="T52654">
    <property type="entry name" value="T52654"/>
</dbReference>
<dbReference type="RefSeq" id="NP_001331281.1">
    <property type="nucleotide sequence ID" value="NM_001345242.1"/>
</dbReference>
<dbReference type="RefSeq" id="NP_200521.3">
    <property type="nucleotide sequence ID" value="NM_125093.6"/>
</dbReference>
<dbReference type="RefSeq" id="NP_851200.1">
    <property type="nucleotide sequence ID" value="NM_180869.3"/>
</dbReference>
<dbReference type="PDB" id="2M73">
    <property type="method" value="NMR"/>
    <property type="chains" value="A=43-67"/>
</dbReference>
<dbReference type="PDB" id="4AQR">
    <property type="method" value="X-ray"/>
    <property type="resolution" value="1.95 A"/>
    <property type="chains" value="D=40-95"/>
</dbReference>
<dbReference type="PDB" id="8QMP">
    <property type="method" value="EM"/>
    <property type="resolution" value="3.30 A"/>
    <property type="chains" value="A=21-1074"/>
</dbReference>
<dbReference type="PDBsum" id="2M73"/>
<dbReference type="PDBsum" id="4AQR"/>
<dbReference type="PDBsum" id="8QMP"/>
<dbReference type="BMRB" id="Q9LF79"/>
<dbReference type="EMDB" id="EMD-18506"/>
<dbReference type="SASBDB" id="Q9LF79"/>
<dbReference type="SMR" id="Q9LF79"/>
<dbReference type="BioGRID" id="21059">
    <property type="interactions" value="4"/>
</dbReference>
<dbReference type="FunCoup" id="Q9LF79">
    <property type="interactions" value="2345"/>
</dbReference>
<dbReference type="IntAct" id="Q9LF79">
    <property type="interactions" value="1"/>
</dbReference>
<dbReference type="STRING" id="3702.Q9LF79"/>
<dbReference type="TCDB" id="3.A.3.2.10">
    <property type="family name" value="the p-type atpase (p-atpase) superfamily"/>
</dbReference>
<dbReference type="GlyGen" id="Q9LF79">
    <property type="glycosylation" value="1 site"/>
</dbReference>
<dbReference type="iPTMnet" id="Q9LF79"/>
<dbReference type="SwissPalm" id="Q9LF79"/>
<dbReference type="PaxDb" id="3702-AT5G57110.2"/>
<dbReference type="ProteomicsDB" id="244372"/>
<dbReference type="EnsemblPlants" id="AT5G57110.1">
    <property type="protein sequence ID" value="AT5G57110.1"/>
    <property type="gene ID" value="AT5G57110"/>
</dbReference>
<dbReference type="EnsemblPlants" id="AT5G57110.2">
    <property type="protein sequence ID" value="AT5G57110.2"/>
    <property type="gene ID" value="AT5G57110"/>
</dbReference>
<dbReference type="EnsemblPlants" id="AT5G57110.3">
    <property type="protein sequence ID" value="AT5G57110.3"/>
    <property type="gene ID" value="AT5G57110"/>
</dbReference>
<dbReference type="GeneID" id="835815"/>
<dbReference type="Gramene" id="AT5G57110.1">
    <property type="protein sequence ID" value="AT5G57110.1"/>
    <property type="gene ID" value="AT5G57110"/>
</dbReference>
<dbReference type="Gramene" id="AT5G57110.2">
    <property type="protein sequence ID" value="AT5G57110.2"/>
    <property type="gene ID" value="AT5G57110"/>
</dbReference>
<dbReference type="Gramene" id="AT5G57110.3">
    <property type="protein sequence ID" value="AT5G57110.3"/>
    <property type="gene ID" value="AT5G57110"/>
</dbReference>
<dbReference type="KEGG" id="ath:AT5G57110"/>
<dbReference type="Araport" id="AT5G57110"/>
<dbReference type="TAIR" id="AT5G57110">
    <property type="gene designation" value="ACA8"/>
</dbReference>
<dbReference type="eggNOG" id="KOG0204">
    <property type="taxonomic scope" value="Eukaryota"/>
</dbReference>
<dbReference type="HOGENOM" id="CLU_002360_9_2_1"/>
<dbReference type="InParanoid" id="Q9LF79"/>
<dbReference type="OMA" id="QLAVTFM"/>
<dbReference type="OrthoDB" id="3352408at2759"/>
<dbReference type="PhylomeDB" id="Q9LF79"/>
<dbReference type="BioCyc" id="ARA:AT5G57110-MONOMER"/>
<dbReference type="BRENDA" id="7.2.2.10">
    <property type="organism ID" value="399"/>
</dbReference>
<dbReference type="CD-CODE" id="4299E36E">
    <property type="entry name" value="Nucleolus"/>
</dbReference>
<dbReference type="EvolutionaryTrace" id="Q9LF79"/>
<dbReference type="PRO" id="PR:Q9LF79"/>
<dbReference type="Proteomes" id="UP000006548">
    <property type="component" value="Chromosome 5"/>
</dbReference>
<dbReference type="ExpressionAtlas" id="Q9LF79">
    <property type="expression patterns" value="baseline and differential"/>
</dbReference>
<dbReference type="GO" id="GO:0005886">
    <property type="term" value="C:plasma membrane"/>
    <property type="evidence" value="ECO:0000314"/>
    <property type="project" value="TAIR"/>
</dbReference>
<dbReference type="GO" id="GO:0009506">
    <property type="term" value="C:plasmodesma"/>
    <property type="evidence" value="ECO:0007005"/>
    <property type="project" value="TAIR"/>
</dbReference>
<dbReference type="GO" id="GO:0009536">
    <property type="term" value="C:plastid"/>
    <property type="evidence" value="ECO:0007005"/>
    <property type="project" value="TAIR"/>
</dbReference>
<dbReference type="GO" id="GO:0005524">
    <property type="term" value="F:ATP binding"/>
    <property type="evidence" value="ECO:0007669"/>
    <property type="project" value="UniProtKB-KW"/>
</dbReference>
<dbReference type="GO" id="GO:0016887">
    <property type="term" value="F:ATP hydrolysis activity"/>
    <property type="evidence" value="ECO:0007669"/>
    <property type="project" value="InterPro"/>
</dbReference>
<dbReference type="GO" id="GO:0005516">
    <property type="term" value="F:calmodulin binding"/>
    <property type="evidence" value="ECO:0007669"/>
    <property type="project" value="UniProtKB-KW"/>
</dbReference>
<dbReference type="GO" id="GO:0046872">
    <property type="term" value="F:metal ion binding"/>
    <property type="evidence" value="ECO:0007669"/>
    <property type="project" value="UniProtKB-KW"/>
</dbReference>
<dbReference type="GO" id="GO:0005388">
    <property type="term" value="F:P-type calcium transporter activity"/>
    <property type="evidence" value="ECO:0000314"/>
    <property type="project" value="TAIR"/>
</dbReference>
<dbReference type="GO" id="GO:0009624">
    <property type="term" value="P:response to nematode"/>
    <property type="evidence" value="ECO:0007007"/>
    <property type="project" value="TAIR"/>
</dbReference>
<dbReference type="CDD" id="cd02081">
    <property type="entry name" value="P-type_ATPase_Ca_PMCA-like"/>
    <property type="match status" value="1"/>
</dbReference>
<dbReference type="FunFam" id="1.20.1110.10:FF:000036">
    <property type="entry name" value="Calcium-transporting ATPase"/>
    <property type="match status" value="1"/>
</dbReference>
<dbReference type="FunFam" id="1.20.1110.10:FF:000039">
    <property type="entry name" value="Calcium-transporting ATPase"/>
    <property type="match status" value="1"/>
</dbReference>
<dbReference type="FunFam" id="1.20.5.170:FF:000029">
    <property type="entry name" value="Calcium-transporting ATPase"/>
    <property type="match status" value="1"/>
</dbReference>
<dbReference type="FunFam" id="2.70.150.10:FF:000006">
    <property type="entry name" value="Calcium-transporting ATPase"/>
    <property type="match status" value="1"/>
</dbReference>
<dbReference type="FunFam" id="3.40.1110.10:FF:000013">
    <property type="entry name" value="Calcium-transporting ATPase"/>
    <property type="match status" value="1"/>
</dbReference>
<dbReference type="FunFam" id="3.40.50.1000:FF:000011">
    <property type="entry name" value="Calcium-transporting ATPase"/>
    <property type="match status" value="1"/>
</dbReference>
<dbReference type="FunFam" id="1.20.1110.10:FF:000097">
    <property type="entry name" value="Calcium-transporting ATPase 9 plasma membrane-type"/>
    <property type="match status" value="1"/>
</dbReference>
<dbReference type="Gene3D" id="1.20.5.170">
    <property type="match status" value="1"/>
</dbReference>
<dbReference type="Gene3D" id="3.40.1110.10">
    <property type="entry name" value="Calcium-transporting ATPase, cytoplasmic domain N"/>
    <property type="match status" value="1"/>
</dbReference>
<dbReference type="Gene3D" id="2.70.150.10">
    <property type="entry name" value="Calcium-transporting ATPase, cytoplasmic transduction domain A"/>
    <property type="match status" value="1"/>
</dbReference>
<dbReference type="Gene3D" id="1.20.1110.10">
    <property type="entry name" value="Calcium-transporting ATPase, transmembrane domain"/>
    <property type="match status" value="1"/>
</dbReference>
<dbReference type="Gene3D" id="3.40.50.1000">
    <property type="entry name" value="HAD superfamily/HAD-like"/>
    <property type="match status" value="1"/>
</dbReference>
<dbReference type="InterPro" id="IPR006068">
    <property type="entry name" value="ATPase_P-typ_cation-transptr_C"/>
</dbReference>
<dbReference type="InterPro" id="IPR004014">
    <property type="entry name" value="ATPase_P-typ_cation-transptr_N"/>
</dbReference>
<dbReference type="InterPro" id="IPR023299">
    <property type="entry name" value="ATPase_P-typ_cyto_dom_N"/>
</dbReference>
<dbReference type="InterPro" id="IPR018303">
    <property type="entry name" value="ATPase_P-typ_P_site"/>
</dbReference>
<dbReference type="InterPro" id="IPR023298">
    <property type="entry name" value="ATPase_P-typ_TM_dom_sf"/>
</dbReference>
<dbReference type="InterPro" id="IPR008250">
    <property type="entry name" value="ATPase_P-typ_transduc_dom_A_sf"/>
</dbReference>
<dbReference type="InterPro" id="IPR024750">
    <property type="entry name" value="Ca_ATPase_N_dom"/>
</dbReference>
<dbReference type="InterPro" id="IPR036412">
    <property type="entry name" value="HAD-like_sf"/>
</dbReference>
<dbReference type="InterPro" id="IPR023214">
    <property type="entry name" value="HAD_sf"/>
</dbReference>
<dbReference type="InterPro" id="IPR006408">
    <property type="entry name" value="P-type_ATPase_IIB"/>
</dbReference>
<dbReference type="InterPro" id="IPR001757">
    <property type="entry name" value="P_typ_ATPase"/>
</dbReference>
<dbReference type="InterPro" id="IPR044492">
    <property type="entry name" value="P_typ_ATPase_HD_dom"/>
</dbReference>
<dbReference type="NCBIfam" id="TIGR01517">
    <property type="entry name" value="ATPase-IIB_Ca"/>
    <property type="match status" value="1"/>
</dbReference>
<dbReference type="NCBIfam" id="TIGR01494">
    <property type="entry name" value="ATPase_P-type"/>
    <property type="match status" value="2"/>
</dbReference>
<dbReference type="PANTHER" id="PTHR24093:SF369">
    <property type="entry name" value="CALCIUM-TRANSPORTING ATPASE"/>
    <property type="match status" value="1"/>
</dbReference>
<dbReference type="PANTHER" id="PTHR24093">
    <property type="entry name" value="CATION TRANSPORTING ATPASE"/>
    <property type="match status" value="1"/>
</dbReference>
<dbReference type="Pfam" id="PF12515">
    <property type="entry name" value="CaATP_NAI"/>
    <property type="match status" value="1"/>
</dbReference>
<dbReference type="Pfam" id="PF13246">
    <property type="entry name" value="Cation_ATPase"/>
    <property type="match status" value="1"/>
</dbReference>
<dbReference type="Pfam" id="PF00689">
    <property type="entry name" value="Cation_ATPase_C"/>
    <property type="match status" value="1"/>
</dbReference>
<dbReference type="Pfam" id="PF00690">
    <property type="entry name" value="Cation_ATPase_N"/>
    <property type="match status" value="1"/>
</dbReference>
<dbReference type="Pfam" id="PF00122">
    <property type="entry name" value="E1-E2_ATPase"/>
    <property type="match status" value="1"/>
</dbReference>
<dbReference type="PRINTS" id="PR00119">
    <property type="entry name" value="CATATPASE"/>
</dbReference>
<dbReference type="PRINTS" id="PR00120">
    <property type="entry name" value="HATPASE"/>
</dbReference>
<dbReference type="SFLD" id="SFLDS00003">
    <property type="entry name" value="Haloacid_Dehalogenase"/>
    <property type="match status" value="1"/>
</dbReference>
<dbReference type="SFLD" id="SFLDF00027">
    <property type="entry name" value="p-type_atpase"/>
    <property type="match status" value="1"/>
</dbReference>
<dbReference type="SMART" id="SM00831">
    <property type="entry name" value="Cation_ATPase_N"/>
    <property type="match status" value="1"/>
</dbReference>
<dbReference type="SUPFAM" id="SSF81653">
    <property type="entry name" value="Calcium ATPase, transduction domain A"/>
    <property type="match status" value="1"/>
</dbReference>
<dbReference type="SUPFAM" id="SSF81665">
    <property type="entry name" value="Calcium ATPase, transmembrane domain M"/>
    <property type="match status" value="1"/>
</dbReference>
<dbReference type="SUPFAM" id="SSF56784">
    <property type="entry name" value="HAD-like"/>
    <property type="match status" value="1"/>
</dbReference>
<dbReference type="SUPFAM" id="SSF81660">
    <property type="entry name" value="Metal cation-transporting ATPase, ATP-binding domain N"/>
    <property type="match status" value="1"/>
</dbReference>
<dbReference type="PROSITE" id="PS00154">
    <property type="entry name" value="ATPASE_E1_E2"/>
    <property type="match status" value="1"/>
</dbReference>
<protein>
    <recommendedName>
        <fullName>Calcium-transporting ATPase 8, plasma membrane-type</fullName>
        <ecNumber>7.2.2.10</ecNumber>
    </recommendedName>
    <alternativeName>
        <fullName>Ca(2+)-ATPase isoform 8</fullName>
    </alternativeName>
</protein>
<proteinExistence type="evidence at protein level"/>
<accession>Q9LF79</accession>
<accession>Q9LU75</accession>
<reference key="1">
    <citation type="journal article" date="2000" name="Plant Physiol.">
        <title>At-ACA8 encodes a plasma membrane-localized Ca2+-ATPase of Arabidopsis with a calmodulin-binding domain at the N-terminus.</title>
        <authorList>
            <person name="Bonza M.C."/>
            <person name="Morandini P."/>
            <person name="Luoni L."/>
            <person name="Geisler M."/>
            <person name="Palmgren M.G."/>
            <person name="De Michelis M.I."/>
        </authorList>
    </citation>
    <scope>NUCLEOTIDE SEQUENCE [MRNA]</scope>
    <scope>PARTIAL PROTEIN SEQUENCE</scope>
    <scope>CALMODULIN-BINDING DOMAIN</scope>
    <source>
        <strain>cv. Landsberg erecta</strain>
    </source>
</reference>
<reference key="2">
    <citation type="journal article" date="2000" name="DNA Res.">
        <title>Structural analysis of Arabidopsis thaliana chromosome 5. X. Sequence features of the regions of 3,076,755 bp covered by sixty P1 and TAC clones.</title>
        <authorList>
            <person name="Sato S."/>
            <person name="Nakamura Y."/>
            <person name="Kaneko T."/>
            <person name="Katoh T."/>
            <person name="Asamizu E."/>
            <person name="Kotani H."/>
            <person name="Tabata S."/>
        </authorList>
    </citation>
    <scope>NUCLEOTIDE SEQUENCE [LARGE SCALE GENOMIC DNA]</scope>
    <source>
        <strain>cv. Columbia</strain>
    </source>
</reference>
<reference key="3">
    <citation type="journal article" date="2017" name="Plant J.">
        <title>Araport11: a complete reannotation of the Arabidopsis thaliana reference genome.</title>
        <authorList>
            <person name="Cheng C.Y."/>
            <person name="Krishnakumar V."/>
            <person name="Chan A.P."/>
            <person name="Thibaud-Nissen F."/>
            <person name="Schobel S."/>
            <person name="Town C.D."/>
        </authorList>
    </citation>
    <scope>GENOME REANNOTATION</scope>
    <source>
        <strain>cv. Columbia</strain>
    </source>
</reference>
<reference key="4">
    <citation type="journal article" date="2003" name="Science">
        <title>Empirical analysis of transcriptional activity in the Arabidopsis genome.</title>
        <authorList>
            <person name="Yamada K."/>
            <person name="Lim J."/>
            <person name="Dale J.M."/>
            <person name="Chen H."/>
            <person name="Shinn P."/>
            <person name="Palm C.J."/>
            <person name="Southwick A.M."/>
            <person name="Wu H.C."/>
            <person name="Kim C.J."/>
            <person name="Nguyen M."/>
            <person name="Pham P.K."/>
            <person name="Cheuk R.F."/>
            <person name="Karlin-Newmann G."/>
            <person name="Liu S.X."/>
            <person name="Lam B."/>
            <person name="Sakano H."/>
            <person name="Wu T."/>
            <person name="Yu G."/>
            <person name="Miranda M."/>
            <person name="Quach H.L."/>
            <person name="Tripp M."/>
            <person name="Chang C.H."/>
            <person name="Lee J.M."/>
            <person name="Toriumi M.J."/>
            <person name="Chan M.M."/>
            <person name="Tang C.C."/>
            <person name="Onodera C.S."/>
            <person name="Deng J.M."/>
            <person name="Akiyama K."/>
            <person name="Ansari Y."/>
            <person name="Arakawa T."/>
            <person name="Banh J."/>
            <person name="Banno F."/>
            <person name="Bowser L."/>
            <person name="Brooks S.Y."/>
            <person name="Carninci P."/>
            <person name="Chao Q."/>
            <person name="Choy N."/>
            <person name="Enju A."/>
            <person name="Goldsmith A.D."/>
            <person name="Gurjal M."/>
            <person name="Hansen N.F."/>
            <person name="Hayashizaki Y."/>
            <person name="Johnson-Hopson C."/>
            <person name="Hsuan V.W."/>
            <person name="Iida K."/>
            <person name="Karnes M."/>
            <person name="Khan S."/>
            <person name="Koesema E."/>
            <person name="Ishida J."/>
            <person name="Jiang P.X."/>
            <person name="Jones T."/>
            <person name="Kawai J."/>
            <person name="Kamiya A."/>
            <person name="Meyers C."/>
            <person name="Nakajima M."/>
            <person name="Narusaka M."/>
            <person name="Seki M."/>
            <person name="Sakurai T."/>
            <person name="Satou M."/>
            <person name="Tamse R."/>
            <person name="Vaysberg M."/>
            <person name="Wallender E.K."/>
            <person name="Wong C."/>
            <person name="Yamamura Y."/>
            <person name="Yuan S."/>
            <person name="Shinozaki K."/>
            <person name="Davis R.W."/>
            <person name="Theologis A."/>
            <person name="Ecker J.R."/>
        </authorList>
    </citation>
    <scope>NUCLEOTIDE SEQUENCE [LARGE SCALE MRNA]</scope>
    <source>
        <strain>cv. Columbia</strain>
    </source>
</reference>
<reference key="5">
    <citation type="journal article" date="2004" name="Plant Cell">
        <title>Phosphoproteomics of the Arabidopsis plasma membrane and a new phosphorylation site database.</title>
        <authorList>
            <person name="Nuehse T.S."/>
            <person name="Stensballe A."/>
            <person name="Jensen O.N."/>
            <person name="Peck S.C."/>
        </authorList>
    </citation>
    <scope>IDENTIFICATION BY MASS SPECTROMETRY [LARGE SCALE ANALYSIS]</scope>
</reference>
<reference key="6">
    <citation type="journal article" date="2007" name="Mol. Cell. Proteomics">
        <title>Temporal analysis of sucrose-induced phosphorylation changes in plasma membrane proteins of Arabidopsis.</title>
        <authorList>
            <person name="Niittylae T."/>
            <person name="Fuglsang A.T."/>
            <person name="Palmgren M.G."/>
            <person name="Frommer W.B."/>
            <person name="Schulze W.X."/>
        </authorList>
    </citation>
    <scope>IDENTIFICATION BY MASS SPECTROMETRY [LARGE SCALE ANALYSIS]</scope>
    <source>
        <tissue>Seedling</tissue>
    </source>
</reference>
<reference key="7">
    <citation type="journal article" date="2009" name="J. Proteomics">
        <title>Phosphoproteomic analysis of nuclei-enriched fractions from Arabidopsis thaliana.</title>
        <authorList>
            <person name="Jones A.M.E."/>
            <person name="MacLean D."/>
            <person name="Studholme D.J."/>
            <person name="Serna-Sanz A."/>
            <person name="Andreasson E."/>
            <person name="Rathjen J.P."/>
            <person name="Peck S.C."/>
        </authorList>
    </citation>
    <scope>IDENTIFICATION BY MASS SPECTROMETRY [LARGE SCALE ANALYSIS]</scope>
    <source>
        <strain>cv. Columbia</strain>
    </source>
</reference>
<reference key="8">
    <citation type="journal article" date="2009" name="Plant Physiol.">
        <title>Large-scale Arabidopsis phosphoproteome profiling reveals novel chloroplast kinase substrates and phosphorylation networks.</title>
        <authorList>
            <person name="Reiland S."/>
            <person name="Messerli G."/>
            <person name="Baerenfaller K."/>
            <person name="Gerrits B."/>
            <person name="Endler A."/>
            <person name="Grossmann J."/>
            <person name="Gruissem W."/>
            <person name="Baginsky S."/>
        </authorList>
    </citation>
    <scope>IDENTIFICATION BY MASS SPECTROMETRY [LARGE SCALE ANALYSIS]</scope>
</reference>
<organism>
    <name type="scientific">Arabidopsis thaliana</name>
    <name type="common">Mouse-ear cress</name>
    <dbReference type="NCBI Taxonomy" id="3702"/>
    <lineage>
        <taxon>Eukaryota</taxon>
        <taxon>Viridiplantae</taxon>
        <taxon>Streptophyta</taxon>
        <taxon>Embryophyta</taxon>
        <taxon>Tracheophyta</taxon>
        <taxon>Spermatophyta</taxon>
        <taxon>Magnoliopsida</taxon>
        <taxon>eudicotyledons</taxon>
        <taxon>Gunneridae</taxon>
        <taxon>Pentapetalae</taxon>
        <taxon>rosids</taxon>
        <taxon>malvids</taxon>
        <taxon>Brassicales</taxon>
        <taxon>Brassicaceae</taxon>
        <taxon>Camelineae</taxon>
        <taxon>Arabidopsis</taxon>
    </lineage>
</organism>
<keyword id="KW-0002">3D-structure</keyword>
<keyword id="KW-0067">ATP-binding</keyword>
<keyword id="KW-0106">Calcium</keyword>
<keyword id="KW-0109">Calcium transport</keyword>
<keyword id="KW-0112">Calmodulin-binding</keyword>
<keyword id="KW-1003">Cell membrane</keyword>
<keyword id="KW-0903">Direct protein sequencing</keyword>
<keyword id="KW-0406">Ion transport</keyword>
<keyword id="KW-0460">Magnesium</keyword>
<keyword id="KW-0472">Membrane</keyword>
<keyword id="KW-0479">Metal-binding</keyword>
<keyword id="KW-0547">Nucleotide-binding</keyword>
<keyword id="KW-1185">Reference proteome</keyword>
<keyword id="KW-1278">Translocase</keyword>
<keyword id="KW-0812">Transmembrane</keyword>
<keyword id="KW-1133">Transmembrane helix</keyword>
<keyword id="KW-0813">Transport</keyword>
<comment type="function">
    <text>This magnesium-dependent enzyme catalyzes the hydrolysis of ATP coupled with the translocation of calcium from the cytosol out of the cell.</text>
</comment>
<comment type="catalytic activity">
    <reaction>
        <text>Ca(2+)(in) + ATP + H2O = Ca(2+)(out) + ADP + phosphate + H(+)</text>
        <dbReference type="Rhea" id="RHEA:18105"/>
        <dbReference type="ChEBI" id="CHEBI:15377"/>
        <dbReference type="ChEBI" id="CHEBI:15378"/>
        <dbReference type="ChEBI" id="CHEBI:29108"/>
        <dbReference type="ChEBI" id="CHEBI:30616"/>
        <dbReference type="ChEBI" id="CHEBI:43474"/>
        <dbReference type="ChEBI" id="CHEBI:456216"/>
        <dbReference type="EC" id="7.2.2.10"/>
    </reaction>
</comment>
<comment type="activity regulation">
    <text evidence="1">Activated by calmodulin.</text>
</comment>
<comment type="interaction">
    <interactant intactId="EBI-980643">
        <id>Q9LF79</id>
    </interactant>
    <interactant intactId="EBI-397403">
        <id>P62157</id>
        <label>CALM</label>
    </interactant>
    <organismsDiffer>true</organismsDiffer>
    <experiments>14</experiments>
</comment>
<comment type="subcellular location">
    <subcellularLocation>
        <location>Cell membrane</location>
        <topology>Multi-pass membrane protein</topology>
    </subcellularLocation>
</comment>
<comment type="domain">
    <text>The N-terminus contains an autoinhibitory calmodulin-binding domain, which binds calmodulin in a calcium-dependent fashion.</text>
</comment>
<comment type="similarity">
    <text evidence="4">Belongs to the cation transport ATPase (P-type) (TC 3.A.3) family. Type IIB subfamily.</text>
</comment>
<comment type="sequence caution" evidence="4">
    <conflict type="erroneous gene model prediction">
        <sequence resource="EMBL-CDS" id="BAA97361"/>
    </conflict>
</comment>